<keyword id="KW-0106">Calcium</keyword>
<keyword id="KW-0325">Glycoprotein</keyword>
<keyword id="KW-0456">Lyase</keyword>
<keyword id="KW-0479">Metal-binding</keyword>
<keyword id="KW-1185">Reference proteome</keyword>
<keyword id="KW-0732">Signal</keyword>
<accession>P15721</accession>
<reference key="1">
    <citation type="journal article" date="1990" name="Plant Mol. Biol.">
        <title>Molecular and genetic characterization of two pollen-expressed genes that have sequence similarity to pectate lyases of the plant pathogen Erwinia.</title>
        <authorList>
            <person name="Wing R.A."/>
            <person name="Yamaguchi J."/>
            <person name="Larabell S.K."/>
            <person name="Ursin V.M."/>
            <person name="McCormick S."/>
        </authorList>
    </citation>
    <scope>NUCLEOTIDE SEQUENCE [GENOMIC DNA]</scope>
    <source>
        <strain>cv. VF36</strain>
        <tissue>Anther</tissue>
    </source>
</reference>
<reference key="2">
    <citation type="submission" date="1994-09" db="EMBL/GenBank/DDBJ databases">
        <authorList>
            <person name="Wing R.A."/>
        </authorList>
    </citation>
    <scope>SEQUENCE REVISION</scope>
</reference>
<dbReference type="EC" id="4.2.2.2"/>
<dbReference type="EMBL" id="X15500">
    <property type="protein sequence ID" value="CAA33524.1"/>
    <property type="molecule type" value="Genomic_DNA"/>
</dbReference>
<dbReference type="PIR" id="T07058">
    <property type="entry name" value="T07058"/>
</dbReference>
<dbReference type="RefSeq" id="NP_001296315.1">
    <property type="nucleotide sequence ID" value="NM_001309386.1"/>
</dbReference>
<dbReference type="SMR" id="P15721"/>
<dbReference type="STRING" id="4081.P15721"/>
<dbReference type="CAZy" id="PL1">
    <property type="family name" value="Polysaccharide Lyase Family 1"/>
</dbReference>
<dbReference type="GlyCosmos" id="P15721">
    <property type="glycosylation" value="2 sites, No reported glycans"/>
</dbReference>
<dbReference type="PaxDb" id="4081-Solyc03g058910.2.1"/>
<dbReference type="EnsemblPlants" id="Solyc03g058910.3.1">
    <property type="protein sequence ID" value="Solyc03g058910.3.1"/>
    <property type="gene ID" value="Solyc03g058910.3"/>
</dbReference>
<dbReference type="GeneID" id="101253756"/>
<dbReference type="Gramene" id="Solyc03g058910.3.1">
    <property type="protein sequence ID" value="Solyc03g058910.3.1"/>
    <property type="gene ID" value="Solyc03g058910.3"/>
</dbReference>
<dbReference type="KEGG" id="sly:101253756"/>
<dbReference type="eggNOG" id="ENOG502QQE2">
    <property type="taxonomic scope" value="Eukaryota"/>
</dbReference>
<dbReference type="HOGENOM" id="CLU_026608_2_1_1"/>
<dbReference type="InParanoid" id="P15721"/>
<dbReference type="OMA" id="NSHDIWI"/>
<dbReference type="OrthoDB" id="1637350at2759"/>
<dbReference type="PhylomeDB" id="P15721"/>
<dbReference type="UniPathway" id="UPA00545">
    <property type="reaction ID" value="UER00824"/>
</dbReference>
<dbReference type="Proteomes" id="UP000004994">
    <property type="component" value="Chromosome 3"/>
</dbReference>
<dbReference type="GO" id="GO:0046872">
    <property type="term" value="F:metal ion binding"/>
    <property type="evidence" value="ECO:0007669"/>
    <property type="project" value="UniProtKB-KW"/>
</dbReference>
<dbReference type="GO" id="GO:0030570">
    <property type="term" value="F:pectate lyase activity"/>
    <property type="evidence" value="ECO:0007669"/>
    <property type="project" value="UniProtKB-EC"/>
</dbReference>
<dbReference type="GO" id="GO:0045490">
    <property type="term" value="P:pectin catabolic process"/>
    <property type="evidence" value="ECO:0007669"/>
    <property type="project" value="UniProtKB-UniPathway"/>
</dbReference>
<dbReference type="Gene3D" id="2.160.20.10">
    <property type="entry name" value="Single-stranded right-handed beta-helix, Pectin lyase-like"/>
    <property type="match status" value="1"/>
</dbReference>
<dbReference type="InterPro" id="IPR018082">
    <property type="entry name" value="AmbAllergen"/>
</dbReference>
<dbReference type="InterPro" id="IPR002022">
    <property type="entry name" value="Pec_lyase"/>
</dbReference>
<dbReference type="InterPro" id="IPR012334">
    <property type="entry name" value="Pectin_lyas_fold"/>
</dbReference>
<dbReference type="InterPro" id="IPR011050">
    <property type="entry name" value="Pectin_lyase_fold/virulence"/>
</dbReference>
<dbReference type="InterPro" id="IPR045032">
    <property type="entry name" value="PEL"/>
</dbReference>
<dbReference type="PANTHER" id="PTHR31683">
    <property type="entry name" value="PECTATE LYASE 18-RELATED"/>
    <property type="match status" value="1"/>
</dbReference>
<dbReference type="PANTHER" id="PTHR31683:SF82">
    <property type="entry name" value="PECTATE LYASE P56-RELATED"/>
    <property type="match status" value="1"/>
</dbReference>
<dbReference type="Pfam" id="PF00544">
    <property type="entry name" value="Pectate_lyase_4"/>
    <property type="match status" value="1"/>
</dbReference>
<dbReference type="PRINTS" id="PR00807">
    <property type="entry name" value="AMBALLERGEN"/>
</dbReference>
<dbReference type="SMART" id="SM00656">
    <property type="entry name" value="Amb_all"/>
    <property type="match status" value="1"/>
</dbReference>
<dbReference type="SUPFAM" id="SSF51126">
    <property type="entry name" value="Pectin lyase-like"/>
    <property type="match status" value="1"/>
</dbReference>
<feature type="signal peptide" evidence="2">
    <location>
        <begin position="1"/>
        <end position="27"/>
    </location>
</feature>
<feature type="chain" id="PRO_0000024890" description="Probable pectate lyase P56">
    <location>
        <begin position="28"/>
        <end position="398"/>
    </location>
</feature>
<feature type="active site" evidence="2">
    <location>
        <position position="273"/>
    </location>
</feature>
<feature type="binding site" evidence="1">
    <location>
        <position position="192"/>
    </location>
    <ligand>
        <name>Ca(2+)</name>
        <dbReference type="ChEBI" id="CHEBI:29108"/>
    </ligand>
</feature>
<feature type="binding site" evidence="1">
    <location>
        <position position="217"/>
    </location>
    <ligand>
        <name>Ca(2+)</name>
        <dbReference type="ChEBI" id="CHEBI:29108"/>
    </ligand>
</feature>
<feature type="binding site" evidence="1">
    <location>
        <position position="221"/>
    </location>
    <ligand>
        <name>Ca(2+)</name>
        <dbReference type="ChEBI" id="CHEBI:29108"/>
    </ligand>
</feature>
<feature type="glycosylation site" description="N-linked (GlcNAc...) asparagine" evidence="2">
    <location>
        <position position="135"/>
    </location>
</feature>
<feature type="glycosylation site" description="N-linked (GlcNAc...) asparagine" evidence="2">
    <location>
        <position position="228"/>
    </location>
</feature>
<comment type="function">
    <text>Might be needed during pollen development and tube growth.</text>
</comment>
<comment type="catalytic activity">
    <reaction>
        <text>Eliminative cleavage of (1-&gt;4)-alpha-D-galacturonan to give oligosaccharides with 4-deoxy-alpha-D-galact-4-enuronosyl groups at their non-reducing ends.</text>
        <dbReference type="EC" id="4.2.2.2"/>
    </reaction>
</comment>
<comment type="cofactor">
    <cofactor evidence="1">
        <name>Ca(2+)</name>
        <dbReference type="ChEBI" id="CHEBI:29108"/>
    </cofactor>
    <text evidence="1">Binds 1 Ca(2+) ion. Required for its activity.</text>
</comment>
<comment type="pathway">
    <text>Glycan metabolism; pectin degradation; 2-dehydro-3-deoxy-D-gluconate from pectin: step 2/5.</text>
</comment>
<comment type="tissue specificity">
    <text>Expressed in anthers and pollen.</text>
</comment>
<comment type="similarity">
    <text evidence="3">Belongs to the polysaccharide lyase 1 family.</text>
</comment>
<name>PLY56_SOLLC</name>
<proteinExistence type="evidence at transcript level"/>
<evidence type="ECO:0000250" key="1"/>
<evidence type="ECO:0000255" key="2"/>
<evidence type="ECO:0000305" key="3"/>
<protein>
    <recommendedName>
        <fullName>Probable pectate lyase P56</fullName>
        <ecNumber>4.2.2.2</ecNumber>
    </recommendedName>
</protein>
<organism>
    <name type="scientific">Solanum lycopersicum</name>
    <name type="common">Tomato</name>
    <name type="synonym">Lycopersicon esculentum</name>
    <dbReference type="NCBI Taxonomy" id="4081"/>
    <lineage>
        <taxon>Eukaryota</taxon>
        <taxon>Viridiplantae</taxon>
        <taxon>Streptophyta</taxon>
        <taxon>Embryophyta</taxon>
        <taxon>Tracheophyta</taxon>
        <taxon>Spermatophyta</taxon>
        <taxon>Magnoliopsida</taxon>
        <taxon>eudicotyledons</taxon>
        <taxon>Gunneridae</taxon>
        <taxon>Pentapetalae</taxon>
        <taxon>asterids</taxon>
        <taxon>lamiids</taxon>
        <taxon>Solanales</taxon>
        <taxon>Solanaceae</taxon>
        <taxon>Solanoideae</taxon>
        <taxon>Solaneae</taxon>
        <taxon>Solanum</taxon>
        <taxon>Solanum subgen. Lycopersicon</taxon>
    </lineage>
</organism>
<gene>
    <name type="primary">LAT56</name>
</gene>
<sequence>MEYSYRTKINVLFIVLILFVFAALGTAINAPRRKLTKKYRGPCMAVNSIDKCWRCDPFWAEDRQKMADCALGFGINAMGGKYGPYYIVTDNSDDDVVDPKPGTLRFGVIQKGPLWITFARSMRIRLTRELIVSSNKTIDGRGKYVHIANGAGIKIQSASNVIISNLRIHNIVPTAGGLLRESDDHLGLRGADEGDAISIFNSHDIWIDHISMSRATDGLIDAVAGSTNITISNCHFTDHEKVMLFGANDHAEEDRGMKITLAYNHFGKRLDQRMPRCRFGFFHLVNNDYTHWERYAIGGSSGATIISQGNRFIAEDKLLVKEVTYREKSTSSVEEWMKWTWITDGDDFENGATFTPSGDQNLLSKIDHLNLIQPEPSSKVGLLTKFSGALSCKIRRPC</sequence>